<dbReference type="EC" id="3.4.21.88" evidence="1"/>
<dbReference type="EMBL" id="CP000529">
    <property type="protein sequence ID" value="ABM37228.1"/>
    <property type="molecule type" value="Genomic_DNA"/>
</dbReference>
<dbReference type="RefSeq" id="WP_011801309.1">
    <property type="nucleotide sequence ID" value="NC_008781.1"/>
</dbReference>
<dbReference type="SMR" id="A1VNK0"/>
<dbReference type="STRING" id="365044.Pnap_1918"/>
<dbReference type="MEROPS" id="S24.001"/>
<dbReference type="KEGG" id="pna:Pnap_1918"/>
<dbReference type="eggNOG" id="COG1974">
    <property type="taxonomic scope" value="Bacteria"/>
</dbReference>
<dbReference type="HOGENOM" id="CLU_066192_45_3_4"/>
<dbReference type="OrthoDB" id="9802364at2"/>
<dbReference type="Proteomes" id="UP000000644">
    <property type="component" value="Chromosome"/>
</dbReference>
<dbReference type="GO" id="GO:0003677">
    <property type="term" value="F:DNA binding"/>
    <property type="evidence" value="ECO:0007669"/>
    <property type="project" value="UniProtKB-UniRule"/>
</dbReference>
<dbReference type="GO" id="GO:0004252">
    <property type="term" value="F:serine-type endopeptidase activity"/>
    <property type="evidence" value="ECO:0007669"/>
    <property type="project" value="UniProtKB-UniRule"/>
</dbReference>
<dbReference type="GO" id="GO:0006281">
    <property type="term" value="P:DNA repair"/>
    <property type="evidence" value="ECO:0007669"/>
    <property type="project" value="UniProtKB-UniRule"/>
</dbReference>
<dbReference type="GO" id="GO:0006260">
    <property type="term" value="P:DNA replication"/>
    <property type="evidence" value="ECO:0007669"/>
    <property type="project" value="UniProtKB-UniRule"/>
</dbReference>
<dbReference type="GO" id="GO:0045892">
    <property type="term" value="P:negative regulation of DNA-templated transcription"/>
    <property type="evidence" value="ECO:0007669"/>
    <property type="project" value="UniProtKB-UniRule"/>
</dbReference>
<dbReference type="GO" id="GO:0006508">
    <property type="term" value="P:proteolysis"/>
    <property type="evidence" value="ECO:0007669"/>
    <property type="project" value="InterPro"/>
</dbReference>
<dbReference type="GO" id="GO:0009432">
    <property type="term" value="P:SOS response"/>
    <property type="evidence" value="ECO:0007669"/>
    <property type="project" value="UniProtKB-UniRule"/>
</dbReference>
<dbReference type="CDD" id="cd06529">
    <property type="entry name" value="S24_LexA-like"/>
    <property type="match status" value="1"/>
</dbReference>
<dbReference type="FunFam" id="1.10.10.10:FF:000009">
    <property type="entry name" value="LexA repressor"/>
    <property type="match status" value="1"/>
</dbReference>
<dbReference type="FunFam" id="2.10.109.10:FF:000001">
    <property type="entry name" value="LexA repressor"/>
    <property type="match status" value="1"/>
</dbReference>
<dbReference type="Gene3D" id="2.10.109.10">
    <property type="entry name" value="Umud Fragment, subunit A"/>
    <property type="match status" value="1"/>
</dbReference>
<dbReference type="Gene3D" id="1.10.10.10">
    <property type="entry name" value="Winged helix-like DNA-binding domain superfamily/Winged helix DNA-binding domain"/>
    <property type="match status" value="1"/>
</dbReference>
<dbReference type="HAMAP" id="MF_00015">
    <property type="entry name" value="LexA"/>
    <property type="match status" value="1"/>
</dbReference>
<dbReference type="InterPro" id="IPR006200">
    <property type="entry name" value="LexA"/>
</dbReference>
<dbReference type="InterPro" id="IPR039418">
    <property type="entry name" value="LexA-like"/>
</dbReference>
<dbReference type="InterPro" id="IPR036286">
    <property type="entry name" value="LexA/Signal_pep-like_sf"/>
</dbReference>
<dbReference type="InterPro" id="IPR006199">
    <property type="entry name" value="LexA_DNA-bd_dom"/>
</dbReference>
<dbReference type="InterPro" id="IPR050077">
    <property type="entry name" value="LexA_repressor"/>
</dbReference>
<dbReference type="InterPro" id="IPR006197">
    <property type="entry name" value="Peptidase_S24_LexA"/>
</dbReference>
<dbReference type="InterPro" id="IPR015927">
    <property type="entry name" value="Peptidase_S24_S26A/B/C"/>
</dbReference>
<dbReference type="InterPro" id="IPR036388">
    <property type="entry name" value="WH-like_DNA-bd_sf"/>
</dbReference>
<dbReference type="InterPro" id="IPR036390">
    <property type="entry name" value="WH_DNA-bd_sf"/>
</dbReference>
<dbReference type="NCBIfam" id="TIGR00498">
    <property type="entry name" value="lexA"/>
    <property type="match status" value="1"/>
</dbReference>
<dbReference type="PANTHER" id="PTHR33516">
    <property type="entry name" value="LEXA REPRESSOR"/>
    <property type="match status" value="1"/>
</dbReference>
<dbReference type="PANTHER" id="PTHR33516:SF2">
    <property type="entry name" value="LEXA REPRESSOR-RELATED"/>
    <property type="match status" value="1"/>
</dbReference>
<dbReference type="Pfam" id="PF01726">
    <property type="entry name" value="LexA_DNA_bind"/>
    <property type="match status" value="1"/>
</dbReference>
<dbReference type="Pfam" id="PF00717">
    <property type="entry name" value="Peptidase_S24"/>
    <property type="match status" value="1"/>
</dbReference>
<dbReference type="PRINTS" id="PR00726">
    <property type="entry name" value="LEXASERPTASE"/>
</dbReference>
<dbReference type="SUPFAM" id="SSF51306">
    <property type="entry name" value="LexA/Signal peptidase"/>
    <property type="match status" value="1"/>
</dbReference>
<dbReference type="SUPFAM" id="SSF46785">
    <property type="entry name" value="Winged helix' DNA-binding domain"/>
    <property type="match status" value="1"/>
</dbReference>
<feature type="chain" id="PRO_0000322752" description="LexA repressor">
    <location>
        <begin position="1"/>
        <end position="234"/>
    </location>
</feature>
<feature type="DNA-binding region" description="H-T-H motif" evidence="1">
    <location>
        <begin position="41"/>
        <end position="61"/>
    </location>
</feature>
<feature type="active site" description="For autocatalytic cleavage activity" evidence="1">
    <location>
        <position position="152"/>
    </location>
</feature>
<feature type="active site" description="For autocatalytic cleavage activity" evidence="1">
    <location>
        <position position="189"/>
    </location>
</feature>
<feature type="site" description="Cleavage; by autolysis" evidence="1">
    <location>
        <begin position="117"/>
        <end position="118"/>
    </location>
</feature>
<protein>
    <recommendedName>
        <fullName evidence="1">LexA repressor</fullName>
        <ecNumber evidence="1">3.4.21.88</ecNumber>
    </recommendedName>
</protein>
<organism>
    <name type="scientific">Polaromonas naphthalenivorans (strain CJ2)</name>
    <dbReference type="NCBI Taxonomy" id="365044"/>
    <lineage>
        <taxon>Bacteria</taxon>
        <taxon>Pseudomonadati</taxon>
        <taxon>Pseudomonadota</taxon>
        <taxon>Betaproteobacteria</taxon>
        <taxon>Burkholderiales</taxon>
        <taxon>Comamonadaceae</taxon>
        <taxon>Polaromonas</taxon>
    </lineage>
</organism>
<gene>
    <name evidence="1" type="primary">lexA</name>
    <name type="ordered locus">Pnap_1918</name>
</gene>
<reference key="1">
    <citation type="journal article" date="2009" name="Environ. Microbiol.">
        <title>The genome of Polaromonas naphthalenivorans strain CJ2, isolated from coal tar-contaminated sediment, reveals physiological and metabolic versatility and evolution through extensive horizontal gene transfer.</title>
        <authorList>
            <person name="Yagi J.M."/>
            <person name="Sims D."/>
            <person name="Brettin T."/>
            <person name="Bruce D."/>
            <person name="Madsen E.L."/>
        </authorList>
    </citation>
    <scope>NUCLEOTIDE SEQUENCE [LARGE SCALE GENOMIC DNA]</scope>
    <source>
        <strain>CJ2</strain>
    </source>
</reference>
<comment type="function">
    <text evidence="1">Represses a number of genes involved in the response to DNA damage (SOS response), including recA and lexA. In the presence of single-stranded DNA, RecA interacts with LexA causing an autocatalytic cleavage which disrupts the DNA-binding part of LexA, leading to derepression of the SOS regulon and eventually DNA repair.</text>
</comment>
<comment type="catalytic activity">
    <reaction evidence="1">
        <text>Hydrolysis of Ala-|-Gly bond in repressor LexA.</text>
        <dbReference type="EC" id="3.4.21.88"/>
    </reaction>
</comment>
<comment type="subunit">
    <text evidence="1">Homodimer.</text>
</comment>
<comment type="similarity">
    <text evidence="1">Belongs to the peptidase S24 family.</text>
</comment>
<proteinExistence type="inferred from homology"/>
<accession>A1VNK0</accession>
<sequence>MRTFNDFSGLPADRPKLTARQAQILELIRNAIAQTGAPPTRAEIAAELGFRSPNAAEEHLKALAKKGVIELVSGTSRGIRLRTDSLQALNESRISQFSPPVQRLEQLTLPLVGRVAAGSPILAQEHIERTYFFESRLFEQQPDYLLKVRGMSMRDIGIMDGDLLAVKQAREAKNGQIVVARLGDEVTVKRFHRNQHLIELLSENPDFKPIVVQPGEPFELEGLAVGLIRGSLAM</sequence>
<evidence type="ECO:0000255" key="1">
    <source>
        <dbReference type="HAMAP-Rule" id="MF_00015"/>
    </source>
</evidence>
<keyword id="KW-0068">Autocatalytic cleavage</keyword>
<keyword id="KW-0227">DNA damage</keyword>
<keyword id="KW-0234">DNA repair</keyword>
<keyword id="KW-0235">DNA replication</keyword>
<keyword id="KW-0238">DNA-binding</keyword>
<keyword id="KW-0378">Hydrolase</keyword>
<keyword id="KW-1185">Reference proteome</keyword>
<keyword id="KW-0678">Repressor</keyword>
<keyword id="KW-0742">SOS response</keyword>
<keyword id="KW-0804">Transcription</keyword>
<keyword id="KW-0805">Transcription regulation</keyword>
<name>LEXA_POLNA</name>